<comment type="function">
    <text evidence="1 2">Inhibits voltage-gated potassium channels (Kv1/KCNA) (PubMed:23895459). Is potent on Drosophila Shaker IR channels (IC(50)=94.25 nM), and rKv1.2/KCNA2 (IC(50)=172.59 nM), and moderately active on hKv1.3/KCNA3 (IC(50)=1006.48 nM), rKv1.6/KCNA6 (IC(50)=2245.93 nM), and Kv1.1/KCNA1 (IC(50) around 3 uM) (PubMed:23895459). In vivo, induces a rapid increase in swimming speed on zebrafish larvae, as well as death which occurs between 2 and 18 hours later (By similarity). Also paralyzes swimming crabs (C.danae) when injected at the junction between the body and the walking leg (PubMed:23895459).</text>
</comment>
<comment type="subcellular location">
    <subcellularLocation>
        <location evidence="2">Secreted</location>
    </subcellularLocation>
    <subcellularLocation>
        <location evidence="2">Nematocyst</location>
    </subcellularLocation>
</comment>
<comment type="PTM">
    <text evidence="2">Contains 4 disulfide bonds.</text>
</comment>
<comment type="mass spectrometry" mass="5710.97" method="MALDI" evidence="2"/>
<comment type="miscellaneous">
    <text evidence="2">Negative results: has no activity on voltage-gated potassium channels rKv1.4/KCNA4, rKv1.5/KCNA5, rKv2.1/KCNB1, rKv3.1/KCNC1, rKv4.1/KCND1, rKv4.3/KCND3 channels, hERG/KCNH2, voltage-gated sodium channels rNav1.2/SCN2A, rNav1.4/SCN4A, and cockroach BgNav1.1.</text>
</comment>
<comment type="similarity">
    <text evidence="4">Belongs to the sea anemone type 5 potassium channel toxin family.</text>
</comment>
<accession>C0HJC4</accession>
<evidence type="ECO:0000250" key="1">
    <source>
        <dbReference type="UniProtKB" id="A7RMN1"/>
    </source>
</evidence>
<evidence type="ECO:0000269" key="2">
    <source>
    </source>
</evidence>
<evidence type="ECO:0000303" key="3">
    <source>
    </source>
</evidence>
<evidence type="ECO:0000305" key="4"/>
<sequence length="50" mass="5718">GCKGKYEECTRDSDCCDEKNRSGRKLRCLTQCDEGGCLKYRQCLFYGGLQ</sequence>
<keyword id="KW-0903">Direct protein sequencing</keyword>
<keyword id="KW-1015">Disulfide bond</keyword>
<keyword id="KW-0872">Ion channel impairing toxin</keyword>
<keyword id="KW-0166">Nematocyst</keyword>
<keyword id="KW-0528">Neurotoxin</keyword>
<keyword id="KW-0632">Potassium channel impairing toxin</keyword>
<keyword id="KW-0964">Secreted</keyword>
<keyword id="KW-0800">Toxin</keyword>
<keyword id="KW-1220">Voltage-gated potassium channel impairing toxin</keyword>
<proteinExistence type="evidence at protein level"/>
<reference key="1">
    <citation type="journal article" date="2013" name="FEBS J.">
        <title>BcsTx3 is a founder of a novel sea anemone toxin family of potassium channel blocker.</title>
        <authorList>
            <person name="Orts D.J."/>
            <person name="Moran Y."/>
            <person name="Cologna C.T."/>
            <person name="Peigneur S."/>
            <person name="Madio B."/>
            <person name="Praher D."/>
            <person name="Quinton L."/>
            <person name="De Pauw E."/>
            <person name="Bicudo J.E."/>
            <person name="Tytgat J."/>
            <person name="de Freitas J.C."/>
        </authorList>
    </citation>
    <scope>PROTEIN SEQUENCE</scope>
    <scope>FUNCTION</scope>
    <scope>SUBCELLULAR LOCATION</scope>
    <scope>MASS SPECTROMETRY</scope>
</reference>
<feature type="chain" id="PRO_0000423941" description="Kappa-actitoxin-Bcs4a" evidence="2">
    <location>
        <begin position="1"/>
        <end position="50"/>
    </location>
</feature>
<feature type="unsure residue" description="Q or E-amide" evidence="2">
    <location>
        <position position="50"/>
    </location>
</feature>
<name>KV53_BUNCI</name>
<protein>
    <recommendedName>
        <fullName evidence="4">Kappa-actitoxin-Bcs4a</fullName>
        <shortName evidence="4">Kappa-AITX-Bcs4a</shortName>
    </recommendedName>
    <alternativeName>
        <fullName evidence="3">Potassium channel toxin BcsTx3</fullName>
    </alternativeName>
</protein>
<organism>
    <name type="scientific">Bunodosoma caissarum</name>
    <name type="common">Sea anemone</name>
    <dbReference type="NCBI Taxonomy" id="31165"/>
    <lineage>
        <taxon>Eukaryota</taxon>
        <taxon>Metazoa</taxon>
        <taxon>Cnidaria</taxon>
        <taxon>Anthozoa</taxon>
        <taxon>Hexacorallia</taxon>
        <taxon>Actiniaria</taxon>
        <taxon>Actiniidae</taxon>
        <taxon>Bunodosoma</taxon>
    </lineage>
</organism>
<dbReference type="SMR" id="C0HJC4"/>
<dbReference type="TCDB" id="8.B.19.1.1">
    <property type="family name" value="the sea anemone k+ channel blocker toxin, bcstx3 (bcstx3) family"/>
</dbReference>
<dbReference type="GO" id="GO:0005576">
    <property type="term" value="C:extracellular region"/>
    <property type="evidence" value="ECO:0000314"/>
    <property type="project" value="UniProtKB"/>
</dbReference>
<dbReference type="GO" id="GO:0042151">
    <property type="term" value="C:nematocyst"/>
    <property type="evidence" value="ECO:0000303"/>
    <property type="project" value="UniProtKB"/>
</dbReference>
<dbReference type="GO" id="GO:0019870">
    <property type="term" value="F:potassium channel inhibitor activity"/>
    <property type="evidence" value="ECO:0000314"/>
    <property type="project" value="UniProtKB"/>
</dbReference>
<dbReference type="GO" id="GO:0090729">
    <property type="term" value="F:toxin activity"/>
    <property type="evidence" value="ECO:0007669"/>
    <property type="project" value="UniProtKB-KW"/>
</dbReference>
<dbReference type="GO" id="GO:0044562">
    <property type="term" value="P:envenomation resulting in negative regulation of voltage-gated potassium channel activity in another organism"/>
    <property type="evidence" value="ECO:0000314"/>
    <property type="project" value="UniProtKB"/>
</dbReference>